<evidence type="ECO:0000255" key="1">
    <source>
        <dbReference type="PROSITE-ProRule" id="PRU00769"/>
    </source>
</evidence>
<evidence type="ECO:0000269" key="2">
    <source>
    </source>
</evidence>
<evidence type="ECO:0000269" key="3">
    <source>
    </source>
</evidence>
<evidence type="ECO:0000269" key="4">
    <source>
    </source>
</evidence>
<evidence type="ECO:0000269" key="5">
    <source>
    </source>
</evidence>
<evidence type="ECO:0000269" key="6">
    <source>
    </source>
</evidence>
<evidence type="ECO:0000269" key="7">
    <source>
    </source>
</evidence>
<evidence type="ECO:0000269" key="8">
    <source>
    </source>
</evidence>
<evidence type="ECO:0000269" key="9">
    <source>
    </source>
</evidence>
<evidence type="ECO:0000269" key="10">
    <source>
    </source>
</evidence>
<evidence type="ECO:0000269" key="11">
    <source>
    </source>
</evidence>
<evidence type="ECO:0000269" key="12">
    <source>
    </source>
</evidence>
<evidence type="ECO:0000269" key="13">
    <source>
    </source>
</evidence>
<evidence type="ECO:0000303" key="14">
    <source>
    </source>
</evidence>
<evidence type="ECO:0000305" key="15"/>
<evidence type="ECO:0007829" key="16">
    <source>
        <dbReference type="PDB" id="5OKL"/>
    </source>
</evidence>
<evidence type="ECO:0007829" key="17">
    <source>
        <dbReference type="PDB" id="6FAK"/>
    </source>
</evidence>
<evidence type="ECO:0007829" key="18">
    <source>
        <dbReference type="PDB" id="6RQ7"/>
    </source>
</evidence>
<gene>
    <name type="primary">AFM</name>
    <name type="synonym">ALB2</name>
    <name type="synonym">ALBA</name>
</gene>
<dbReference type="EMBL" id="L32140">
    <property type="protein sequence ID" value="AAA21612.1"/>
    <property type="molecule type" value="mRNA"/>
</dbReference>
<dbReference type="EMBL" id="U51243">
    <property type="protein sequence ID" value="AAC50720.1"/>
    <property type="molecule type" value="Genomic_DNA"/>
</dbReference>
<dbReference type="EMBL" id="AK290556">
    <property type="protein sequence ID" value="BAF83245.1"/>
    <property type="molecule type" value="mRNA"/>
</dbReference>
<dbReference type="EMBL" id="AC108157">
    <property type="status" value="NOT_ANNOTATED_CDS"/>
    <property type="molecule type" value="Genomic_DNA"/>
</dbReference>
<dbReference type="EMBL" id="AC110752">
    <property type="protein sequence ID" value="AAY41051.1"/>
    <property type="molecule type" value="Genomic_DNA"/>
</dbReference>
<dbReference type="EMBL" id="CH471057">
    <property type="protein sequence ID" value="EAX05682.1"/>
    <property type="molecule type" value="Genomic_DNA"/>
</dbReference>
<dbReference type="EMBL" id="BC109020">
    <property type="protein sequence ID" value="AAI09021.1"/>
    <property type="molecule type" value="mRNA"/>
</dbReference>
<dbReference type="EMBL" id="BC109021">
    <property type="protein sequence ID" value="AAI09022.1"/>
    <property type="molecule type" value="mRNA"/>
</dbReference>
<dbReference type="EMBL" id="L35486">
    <property type="protein sequence ID" value="AAA68197.1"/>
    <property type="molecule type" value="mRNA"/>
</dbReference>
<dbReference type="EMBL" id="L35497">
    <property type="protein sequence ID" value="AAA68198.1"/>
    <property type="molecule type" value="mRNA"/>
</dbReference>
<dbReference type="EMBL" id="L35498">
    <property type="protein sequence ID" value="AAA68199.1"/>
    <property type="molecule type" value="mRNA"/>
</dbReference>
<dbReference type="CCDS" id="CCDS3557.1"/>
<dbReference type="PIR" id="A54906">
    <property type="entry name" value="A54906"/>
</dbReference>
<dbReference type="PIR" id="I39424">
    <property type="entry name" value="I39424"/>
</dbReference>
<dbReference type="PIR" id="I39426">
    <property type="entry name" value="I39426"/>
</dbReference>
<dbReference type="RefSeq" id="NP_001124.1">
    <property type="nucleotide sequence ID" value="NM_001133.2"/>
</dbReference>
<dbReference type="PDB" id="5OKL">
    <property type="method" value="X-ray"/>
    <property type="resolution" value="2.09 A"/>
    <property type="chains" value="A/B=22-599"/>
</dbReference>
<dbReference type="PDB" id="6FAK">
    <property type="method" value="X-ray"/>
    <property type="resolution" value="1.90 A"/>
    <property type="chains" value="A=22-599"/>
</dbReference>
<dbReference type="PDB" id="6RQ7">
    <property type="method" value="X-ray"/>
    <property type="resolution" value="2.69 A"/>
    <property type="chains" value="B=22-599"/>
</dbReference>
<dbReference type="PDBsum" id="5OKL"/>
<dbReference type="PDBsum" id="6FAK"/>
<dbReference type="PDBsum" id="6RQ7"/>
<dbReference type="SMR" id="P43652"/>
<dbReference type="BioGRID" id="106681">
    <property type="interactions" value="11"/>
</dbReference>
<dbReference type="FunCoup" id="P43652">
    <property type="interactions" value="58"/>
</dbReference>
<dbReference type="IntAct" id="P43652">
    <property type="interactions" value="23"/>
</dbReference>
<dbReference type="STRING" id="9606.ENSP00000226355"/>
<dbReference type="DrugBank" id="DB09130">
    <property type="generic name" value="Copper"/>
</dbReference>
<dbReference type="GlyConnect" id="731">
    <property type="glycosylation" value="21 N-Linked glycans (6 sites)"/>
</dbReference>
<dbReference type="GlyCosmos" id="P43652">
    <property type="glycosylation" value="6 sites, 30 glycans"/>
</dbReference>
<dbReference type="GlyGen" id="P43652">
    <property type="glycosylation" value="6 sites, 67 N-linked glycans (6 sites)"/>
</dbReference>
<dbReference type="iPTMnet" id="P43652"/>
<dbReference type="PhosphoSitePlus" id="P43652"/>
<dbReference type="BioMuta" id="AFM"/>
<dbReference type="DMDM" id="1168366"/>
<dbReference type="CPTAC" id="CPTAC-649"/>
<dbReference type="CPTAC" id="CPTAC-650"/>
<dbReference type="CPTAC" id="non-CPTAC-1058"/>
<dbReference type="CPTAC" id="non-CPTAC-1059"/>
<dbReference type="CPTAC" id="non-CPTAC-1060"/>
<dbReference type="jPOST" id="P43652"/>
<dbReference type="MassIVE" id="P43652"/>
<dbReference type="PaxDb" id="9606-ENSP00000226355"/>
<dbReference type="PeptideAtlas" id="P43652"/>
<dbReference type="ProteomicsDB" id="55647"/>
<dbReference type="ABCD" id="P43652">
    <property type="antibodies" value="1 sequenced antibody"/>
</dbReference>
<dbReference type="Antibodypedia" id="1356">
    <property type="antibodies" value="266 antibodies from 32 providers"/>
</dbReference>
<dbReference type="DNASU" id="173"/>
<dbReference type="Ensembl" id="ENST00000226355.5">
    <property type="protein sequence ID" value="ENSP00000226355.3"/>
    <property type="gene ID" value="ENSG00000079557.5"/>
</dbReference>
<dbReference type="GeneID" id="173"/>
<dbReference type="KEGG" id="hsa:173"/>
<dbReference type="MANE-Select" id="ENST00000226355.5">
    <property type="protein sequence ID" value="ENSP00000226355.3"/>
    <property type="RefSeq nucleotide sequence ID" value="NM_001133.2"/>
    <property type="RefSeq protein sequence ID" value="NP_001124.1"/>
</dbReference>
<dbReference type="UCSC" id="uc003hhb.4">
    <property type="organism name" value="human"/>
</dbReference>
<dbReference type="AGR" id="HGNC:316"/>
<dbReference type="CTD" id="173"/>
<dbReference type="DisGeNET" id="173"/>
<dbReference type="GeneCards" id="AFM"/>
<dbReference type="HGNC" id="HGNC:316">
    <property type="gene designation" value="AFM"/>
</dbReference>
<dbReference type="HPA" id="ENSG00000079557">
    <property type="expression patterns" value="Tissue enriched (liver)"/>
</dbReference>
<dbReference type="MIM" id="104145">
    <property type="type" value="gene"/>
</dbReference>
<dbReference type="neXtProt" id="NX_P43652"/>
<dbReference type="OpenTargets" id="ENSG00000079557"/>
<dbReference type="PharmGKB" id="PA24613"/>
<dbReference type="VEuPathDB" id="HostDB:ENSG00000079557"/>
<dbReference type="eggNOG" id="ENOG502R7EA">
    <property type="taxonomic scope" value="Eukaryota"/>
</dbReference>
<dbReference type="GeneTree" id="ENSGT00390000000113"/>
<dbReference type="HOGENOM" id="CLU_030161_2_0_1"/>
<dbReference type="InParanoid" id="P43652"/>
<dbReference type="OMA" id="KECCHTE"/>
<dbReference type="OrthoDB" id="9875082at2759"/>
<dbReference type="PAN-GO" id="P43652">
    <property type="GO annotations" value="6 GO annotations based on evolutionary models"/>
</dbReference>
<dbReference type="PhylomeDB" id="P43652"/>
<dbReference type="TreeFam" id="TF335561"/>
<dbReference type="PathwayCommons" id="P43652"/>
<dbReference type="SignaLink" id="P43652"/>
<dbReference type="BioGRID-ORCS" id="173">
    <property type="hits" value="41 hits in 1141 CRISPR screens"/>
</dbReference>
<dbReference type="ChiTaRS" id="AFM">
    <property type="organism name" value="human"/>
</dbReference>
<dbReference type="GeneWiki" id="Afamin"/>
<dbReference type="GenomeRNAi" id="173"/>
<dbReference type="Pharos" id="P43652">
    <property type="development level" value="Tbio"/>
</dbReference>
<dbReference type="PRO" id="PR:P43652"/>
<dbReference type="Proteomes" id="UP000005640">
    <property type="component" value="Chromosome 4"/>
</dbReference>
<dbReference type="RNAct" id="P43652">
    <property type="molecule type" value="protein"/>
</dbReference>
<dbReference type="Bgee" id="ENSG00000079557">
    <property type="expression patterns" value="Expressed in right lobe of liver and 53 other cell types or tissues"/>
</dbReference>
<dbReference type="GO" id="GO:0072562">
    <property type="term" value="C:blood microparticle"/>
    <property type="evidence" value="ECO:0007005"/>
    <property type="project" value="UniProtKB"/>
</dbReference>
<dbReference type="GO" id="GO:0005737">
    <property type="term" value="C:cytoplasm"/>
    <property type="evidence" value="ECO:0000318"/>
    <property type="project" value="GO_Central"/>
</dbReference>
<dbReference type="GO" id="GO:0070062">
    <property type="term" value="C:extracellular exosome"/>
    <property type="evidence" value="ECO:0007005"/>
    <property type="project" value="UniProtKB"/>
</dbReference>
<dbReference type="GO" id="GO:0005576">
    <property type="term" value="C:extracellular region"/>
    <property type="evidence" value="ECO:0000304"/>
    <property type="project" value="ProtInc"/>
</dbReference>
<dbReference type="GO" id="GO:0005615">
    <property type="term" value="C:extracellular space"/>
    <property type="evidence" value="ECO:0000314"/>
    <property type="project" value="UniProtKB"/>
</dbReference>
<dbReference type="GO" id="GO:0008431">
    <property type="term" value="F:vitamin E binding"/>
    <property type="evidence" value="ECO:0000314"/>
    <property type="project" value="UniProtKB"/>
</dbReference>
<dbReference type="GO" id="GO:0050821">
    <property type="term" value="P:protein stabilization"/>
    <property type="evidence" value="ECO:0000314"/>
    <property type="project" value="UniProtKB"/>
</dbReference>
<dbReference type="GO" id="GO:0071693">
    <property type="term" value="P:protein transport within extracellular region"/>
    <property type="evidence" value="ECO:0000315"/>
    <property type="project" value="UniProtKB"/>
</dbReference>
<dbReference type="GO" id="GO:0051180">
    <property type="term" value="P:vitamin transport"/>
    <property type="evidence" value="ECO:0000314"/>
    <property type="project" value="UniProtKB"/>
</dbReference>
<dbReference type="CDD" id="cd00015">
    <property type="entry name" value="ALBUMIN"/>
    <property type="match status" value="3"/>
</dbReference>
<dbReference type="FunFam" id="1.10.246.10:FF:000001">
    <property type="entry name" value="Serum albumin"/>
    <property type="match status" value="3"/>
</dbReference>
<dbReference type="FunFam" id="1.10.246.10:FF:000002">
    <property type="entry name" value="Serum albumin"/>
    <property type="match status" value="2"/>
</dbReference>
<dbReference type="FunFam" id="1.10.246.10:FF:000004">
    <property type="entry name" value="Serum albumin"/>
    <property type="match status" value="1"/>
</dbReference>
<dbReference type="Gene3D" id="1.10.246.10">
    <property type="match status" value="6"/>
</dbReference>
<dbReference type="InterPro" id="IPR000264">
    <property type="entry name" value="ALB/AFP/VDB"/>
</dbReference>
<dbReference type="InterPro" id="IPR020858">
    <property type="entry name" value="Serum_albumin-like"/>
</dbReference>
<dbReference type="InterPro" id="IPR021177">
    <property type="entry name" value="Serum_albumin/AFP/Afamin"/>
</dbReference>
<dbReference type="InterPro" id="IPR020857">
    <property type="entry name" value="Serum_albumin_CS"/>
</dbReference>
<dbReference type="InterPro" id="IPR014760">
    <property type="entry name" value="Serum_albumin_N"/>
</dbReference>
<dbReference type="PANTHER" id="PTHR11385:SF14">
    <property type="entry name" value="AFAMIN"/>
    <property type="match status" value="1"/>
</dbReference>
<dbReference type="PANTHER" id="PTHR11385">
    <property type="entry name" value="SERUM ALBUMIN-RELATED"/>
    <property type="match status" value="1"/>
</dbReference>
<dbReference type="Pfam" id="PF00273">
    <property type="entry name" value="Serum_albumin"/>
    <property type="match status" value="3"/>
</dbReference>
<dbReference type="PIRSF" id="PIRSF002520">
    <property type="entry name" value="Serum_albumin_subgroup"/>
    <property type="match status" value="1"/>
</dbReference>
<dbReference type="PRINTS" id="PR00803">
    <property type="entry name" value="AFETOPROTEIN"/>
</dbReference>
<dbReference type="PRINTS" id="PR00802">
    <property type="entry name" value="SERUMALBUMIN"/>
</dbReference>
<dbReference type="SMART" id="SM00103">
    <property type="entry name" value="ALBUMIN"/>
    <property type="match status" value="3"/>
</dbReference>
<dbReference type="SUPFAM" id="SSF48552">
    <property type="entry name" value="Serum albumin-like"/>
    <property type="match status" value="3"/>
</dbReference>
<dbReference type="PROSITE" id="PS00212">
    <property type="entry name" value="ALBUMIN_1"/>
    <property type="match status" value="3"/>
</dbReference>
<dbReference type="PROSITE" id="PS51438">
    <property type="entry name" value="ALBUMIN_2"/>
    <property type="match status" value="3"/>
</dbReference>
<keyword id="KW-0002">3D-structure</keyword>
<keyword id="KW-0903">Direct protein sequencing</keyword>
<keyword id="KW-1015">Disulfide bond</keyword>
<keyword id="KW-0325">Glycoprotein</keyword>
<keyword id="KW-0653">Protein transport</keyword>
<keyword id="KW-1267">Proteomics identification</keyword>
<keyword id="KW-1185">Reference proteome</keyword>
<keyword id="KW-0677">Repeat</keyword>
<keyword id="KW-0964">Secreted</keyword>
<keyword id="KW-0732">Signal</keyword>
<keyword id="KW-0813">Transport</keyword>
<feature type="signal peptide" evidence="4">
    <location>
        <begin position="1"/>
        <end position="21"/>
    </location>
</feature>
<feature type="chain" id="PRO_0000001106" description="Afamin">
    <location>
        <begin position="22"/>
        <end position="599"/>
    </location>
</feature>
<feature type="domain" description="Albumin 1" evidence="1">
    <location>
        <begin position="22"/>
        <end position="210"/>
    </location>
</feature>
<feature type="domain" description="Albumin 2" evidence="1">
    <location>
        <begin position="211"/>
        <end position="403"/>
    </location>
</feature>
<feature type="domain" description="Albumin 3" evidence="1">
    <location>
        <begin position="404"/>
        <end position="599"/>
    </location>
</feature>
<feature type="region of interest" description="Binding pocket for hydrophobic ligands" evidence="12">
    <location>
        <begin position="215"/>
        <end position="319"/>
    </location>
</feature>
<feature type="glycosylation site" description="N-linked (GlcNAc...) (complex) asparagine" evidence="5 6 8 9">
    <location>
        <position position="33"/>
    </location>
</feature>
<feature type="glycosylation site" description="N-linked (GlcNAc...) (complex) asparagine" evidence="10">
    <location>
        <position position="109"/>
    </location>
</feature>
<feature type="glycosylation site" description="N-linked (GlcNAc...) (complex) asparagine; atypical" evidence="8 10">
    <location>
        <position position="383"/>
    </location>
</feature>
<feature type="glycosylation site" description="N-linked (GlcNAc...) (complex) asparagine" evidence="3 5 8 9 10 11">
    <location>
        <position position="402"/>
    </location>
</feature>
<feature type="glycosylation site" description="N-linked (GlcNAc...) asparagine" evidence="5 11">
    <location>
        <position position="488"/>
    </location>
</feature>
<feature type="disulfide bond" evidence="1 12">
    <location>
        <begin position="77"/>
        <end position="86"/>
    </location>
</feature>
<feature type="disulfide bond" evidence="1 12">
    <location>
        <begin position="99"/>
        <end position="114"/>
    </location>
</feature>
<feature type="disulfide bond" evidence="1 12">
    <location>
        <begin position="113"/>
        <end position="124"/>
    </location>
</feature>
<feature type="disulfide bond" evidence="1">
    <location>
        <begin position="148"/>
        <end position="193"/>
    </location>
</feature>
<feature type="disulfide bond" evidence="1 12">
    <location>
        <begin position="192"/>
        <end position="201"/>
    </location>
</feature>
<feature type="disulfide bond" evidence="1 12">
    <location>
        <begin position="224"/>
        <end position="270"/>
    </location>
</feature>
<feature type="disulfide bond" evidence="1 12">
    <location>
        <begin position="269"/>
        <end position="277"/>
    </location>
</feature>
<feature type="disulfide bond" evidence="1 12">
    <location>
        <begin position="289"/>
        <end position="303"/>
    </location>
</feature>
<feature type="disulfide bond" evidence="1 12">
    <location>
        <begin position="302"/>
        <end position="313"/>
    </location>
</feature>
<feature type="disulfide bond" evidence="1 12">
    <location>
        <begin position="340"/>
        <end position="385"/>
    </location>
</feature>
<feature type="disulfide bond" evidence="1 12">
    <location>
        <begin position="384"/>
        <end position="393"/>
    </location>
</feature>
<feature type="disulfide bond" evidence="1 12">
    <location>
        <begin position="416"/>
        <end position="462"/>
    </location>
</feature>
<feature type="disulfide bond" evidence="1 12">
    <location>
        <begin position="461"/>
        <end position="470"/>
    </location>
</feature>
<feature type="disulfide bond" evidence="1 12">
    <location>
        <begin position="483"/>
        <end position="499"/>
    </location>
</feature>
<feature type="disulfide bond" evidence="1 12">
    <location>
        <begin position="498"/>
        <end position="509"/>
    </location>
</feature>
<feature type="disulfide bond" evidence="1 12">
    <location>
        <begin position="536"/>
        <end position="581"/>
    </location>
</feature>
<feature type="disulfide bond" evidence="1 12">
    <location>
        <begin position="580"/>
        <end position="589"/>
    </location>
</feature>
<feature type="sequence variant" id="VAR_061003" description="In dbSNP:rs41265665.">
    <original>R</original>
    <variation>H</variation>
    <location>
        <position position="395"/>
    </location>
</feature>
<feature type="sequence variant" id="VAR_048218" description="In dbSNP:rs2276444.">
    <original>T</original>
    <variation>S</variation>
    <location>
        <position position="404"/>
    </location>
</feature>
<feature type="helix" evidence="17">
    <location>
        <begin position="34"/>
        <end position="41"/>
    </location>
</feature>
<feature type="helix" evidence="17">
    <location>
        <begin position="43"/>
        <end position="54"/>
    </location>
</feature>
<feature type="turn" evidence="18">
    <location>
        <begin position="55"/>
        <end position="57"/>
    </location>
</feature>
<feature type="helix" evidence="17">
    <location>
        <begin position="60"/>
        <end position="79"/>
    </location>
</feature>
<feature type="helix" evidence="17">
    <location>
        <begin position="84"/>
        <end position="87"/>
    </location>
</feature>
<feature type="helix" evidence="17">
    <location>
        <begin position="90"/>
        <end position="99"/>
    </location>
</feature>
<feature type="helix" evidence="17">
    <location>
        <begin position="104"/>
        <end position="107"/>
    </location>
</feature>
<feature type="helix" evidence="17">
    <location>
        <begin position="111"/>
        <end position="114"/>
    </location>
</feature>
<feature type="helix" evidence="17">
    <location>
        <begin position="118"/>
        <end position="127"/>
    </location>
</feature>
<feature type="helix" evidence="17">
    <location>
        <begin position="144"/>
        <end position="153"/>
    </location>
</feature>
<feature type="helix" evidence="17">
    <location>
        <begin position="155"/>
        <end position="169"/>
    </location>
</feature>
<feature type="helix" evidence="17">
    <location>
        <begin position="175"/>
        <end position="192"/>
    </location>
</feature>
<feature type="strand" evidence="17">
    <location>
        <begin position="195"/>
        <end position="197"/>
    </location>
</feature>
<feature type="helix" evidence="17">
    <location>
        <begin position="198"/>
        <end position="230"/>
    </location>
</feature>
<feature type="helix" evidence="17">
    <location>
        <begin position="232"/>
        <end position="235"/>
    </location>
</feature>
<feature type="helix" evidence="17">
    <location>
        <begin position="237"/>
        <end position="246"/>
    </location>
</feature>
<feature type="helix" evidence="17">
    <location>
        <begin position="252"/>
        <end position="271"/>
    </location>
</feature>
<feature type="helix" evidence="17">
    <location>
        <begin position="274"/>
        <end position="289"/>
    </location>
</feature>
<feature type="turn" evidence="17">
    <location>
        <begin position="293"/>
        <end position="295"/>
    </location>
</feature>
<feature type="turn" evidence="17">
    <location>
        <begin position="300"/>
        <end position="304"/>
    </location>
</feature>
<feature type="helix" evidence="17">
    <location>
        <begin position="309"/>
        <end position="316"/>
    </location>
</feature>
<feature type="turn" evidence="17">
    <location>
        <begin position="331"/>
        <end position="335"/>
    </location>
</feature>
<feature type="helix" evidence="17">
    <location>
        <begin position="339"/>
        <end position="345"/>
    </location>
</feature>
<feature type="helix" evidence="17">
    <location>
        <begin position="347"/>
        <end position="360"/>
    </location>
</feature>
<feature type="helix" evidence="17">
    <location>
        <begin position="367"/>
        <end position="384"/>
    </location>
</feature>
<feature type="helix" evidence="17">
    <location>
        <begin position="390"/>
        <end position="394"/>
    </location>
</feature>
<feature type="helix" evidence="17">
    <location>
        <begin position="397"/>
        <end position="438"/>
    </location>
</feature>
<feature type="helix" evidence="17">
    <location>
        <begin position="444"/>
        <end position="461"/>
    </location>
</feature>
<feature type="helix" evidence="17">
    <location>
        <begin position="467"/>
        <end position="483"/>
    </location>
</feature>
<feature type="strand" evidence="17">
    <location>
        <begin position="485"/>
        <end position="487"/>
    </location>
</feature>
<feature type="helix" evidence="17">
    <location>
        <begin position="493"/>
        <end position="500"/>
    </location>
</feature>
<feature type="helix" evidence="17">
    <location>
        <begin position="506"/>
        <end position="511"/>
    </location>
</feature>
<feature type="helix" evidence="17">
    <location>
        <begin position="526"/>
        <end position="529"/>
    </location>
</feature>
<feature type="helix" evidence="17">
    <location>
        <begin position="533"/>
        <end position="535"/>
    </location>
</feature>
<feature type="helix" evidence="17">
    <location>
        <begin position="542"/>
        <end position="557"/>
    </location>
</feature>
<feature type="turn" evidence="17">
    <location>
        <begin position="558"/>
        <end position="560"/>
    </location>
</feature>
<feature type="helix" evidence="17">
    <location>
        <begin position="563"/>
        <end position="581"/>
    </location>
</feature>
<feature type="strand" evidence="16">
    <location>
        <begin position="583"/>
        <end position="585"/>
    </location>
</feature>
<feature type="helix" evidence="17">
    <location>
        <begin position="586"/>
        <end position="593"/>
    </location>
</feature>
<sequence length="599" mass="69069">MKLLKLTGFIFFLFFLTESLTLPTQPRDIENFNSTQKFIEDNIEYITIIAFAQYVQEATFEEMEKLVKDMVEYKDRCMADKTLPECSKLPNNVLQEKICAMEGLPQKHNFSHCCSKVDAQRRLCFFYNKKSDVGFLPPFPTLDPEEKCQAYESNRESLLNHFLYEVARRNPFVFAPTLLTVAVHFEEVAKSCCEEQNKVNCLQTRAIPVTQYLKAFSSYQKHVCGALLKFGTKVVHFIYIAILSQKFPKIEFKELISLVEDVSSNYDGCCEGDVVQCIRDTSKVMNHICSKQDSISSKIKECCEKKIPERGQCIINSNKDDRPKDLSLREGKFTDSENVCQERDADPDTFFAKFTFEYSRRHPDLSIPELLRIVQIYKDLLRNCCNTENPPGCYRYAEDKFNETTEKSLKMVQQECKHFQNLGKDGLKYHYLIRLTKIAPQLSTEELVSLGEKMVTAFTTCCTLSEEFACVDNLADLVFGELCGVNENRTINPAVDHCCKTNFAFRRPCFESLKADKTYVPPPFSQDLFTFHADMCQSQNEELQRKTDRFLVNLVKLKHELTDEELQSLFTNFANVVDKCCKAESPEVCFNEESPKIGN</sequence>
<protein>
    <recommendedName>
        <fullName>Afamin</fullName>
    </recommendedName>
    <alternativeName>
        <fullName evidence="14">Alpha-albumin</fullName>
        <shortName>Alpha-Alb</shortName>
    </alternativeName>
</protein>
<accession>P43652</accession>
<accession>A8K3E1</accession>
<accession>Q32MR3</accession>
<accession>Q4W5C5</accession>
<reference key="1">
    <citation type="journal article" date="1994" name="J. Biol. Chem.">
        <title>Afamin is a new member of the albumin, alpha-fetoprotein, and vitamin D-binding protein gene family.</title>
        <authorList>
            <person name="Lichenstein H.S."/>
            <person name="Lyons D.E."/>
            <person name="Wurfel M.M."/>
            <person name="Johnson D.A."/>
            <person name="McGinley M.D."/>
            <person name="Leidli J.C."/>
            <person name="Trollinger D.B."/>
            <person name="Mayer J.P."/>
            <person name="Wright S.D."/>
            <person name="Zukowski M.M."/>
        </authorList>
    </citation>
    <scope>NUCLEOTIDE SEQUENCE [MRNA]</scope>
    <scope>PROTEIN SEQUENCE OF 22-56</scope>
    <scope>PARTIAL PROTEIN SEQUENCE</scope>
    <scope>SUBCELLULAR LOCATION</scope>
    <scope>TISSUE SPECIFICITY</scope>
    <source>
        <tissue>Liver</tissue>
    </source>
</reference>
<reference key="2">
    <citation type="journal article" date="1996" name="Proc. Natl. Acad. Sci. U.S.A.">
        <title>Complete structure of the human alpha-albumin gene, a new member of the serum albumin multigene family.</title>
        <authorList>
            <person name="Nishio H."/>
            <person name="Dugaiczyk A."/>
        </authorList>
    </citation>
    <scope>NUCLEOTIDE SEQUENCE [GENOMIC DNA]</scope>
</reference>
<reference key="3">
    <citation type="journal article" date="2004" name="Nat. Genet.">
        <title>Complete sequencing and characterization of 21,243 full-length human cDNAs.</title>
        <authorList>
            <person name="Ota T."/>
            <person name="Suzuki Y."/>
            <person name="Nishikawa T."/>
            <person name="Otsuki T."/>
            <person name="Sugiyama T."/>
            <person name="Irie R."/>
            <person name="Wakamatsu A."/>
            <person name="Hayashi K."/>
            <person name="Sato H."/>
            <person name="Nagai K."/>
            <person name="Kimura K."/>
            <person name="Makita H."/>
            <person name="Sekine M."/>
            <person name="Obayashi M."/>
            <person name="Nishi T."/>
            <person name="Shibahara T."/>
            <person name="Tanaka T."/>
            <person name="Ishii S."/>
            <person name="Yamamoto J."/>
            <person name="Saito K."/>
            <person name="Kawai Y."/>
            <person name="Isono Y."/>
            <person name="Nakamura Y."/>
            <person name="Nagahari K."/>
            <person name="Murakami K."/>
            <person name="Yasuda T."/>
            <person name="Iwayanagi T."/>
            <person name="Wagatsuma M."/>
            <person name="Shiratori A."/>
            <person name="Sudo H."/>
            <person name="Hosoiri T."/>
            <person name="Kaku Y."/>
            <person name="Kodaira H."/>
            <person name="Kondo H."/>
            <person name="Sugawara M."/>
            <person name="Takahashi M."/>
            <person name="Kanda K."/>
            <person name="Yokoi T."/>
            <person name="Furuya T."/>
            <person name="Kikkawa E."/>
            <person name="Omura Y."/>
            <person name="Abe K."/>
            <person name="Kamihara K."/>
            <person name="Katsuta N."/>
            <person name="Sato K."/>
            <person name="Tanikawa M."/>
            <person name="Yamazaki M."/>
            <person name="Ninomiya K."/>
            <person name="Ishibashi T."/>
            <person name="Yamashita H."/>
            <person name="Murakawa K."/>
            <person name="Fujimori K."/>
            <person name="Tanai H."/>
            <person name="Kimata M."/>
            <person name="Watanabe M."/>
            <person name="Hiraoka S."/>
            <person name="Chiba Y."/>
            <person name="Ishida S."/>
            <person name="Ono Y."/>
            <person name="Takiguchi S."/>
            <person name="Watanabe S."/>
            <person name="Yosida M."/>
            <person name="Hotuta T."/>
            <person name="Kusano J."/>
            <person name="Kanehori K."/>
            <person name="Takahashi-Fujii A."/>
            <person name="Hara H."/>
            <person name="Tanase T.-O."/>
            <person name="Nomura Y."/>
            <person name="Togiya S."/>
            <person name="Komai F."/>
            <person name="Hara R."/>
            <person name="Takeuchi K."/>
            <person name="Arita M."/>
            <person name="Imose N."/>
            <person name="Musashino K."/>
            <person name="Yuuki H."/>
            <person name="Oshima A."/>
            <person name="Sasaki N."/>
            <person name="Aotsuka S."/>
            <person name="Yoshikawa Y."/>
            <person name="Matsunawa H."/>
            <person name="Ichihara T."/>
            <person name="Shiohata N."/>
            <person name="Sano S."/>
            <person name="Moriya S."/>
            <person name="Momiyama H."/>
            <person name="Satoh N."/>
            <person name="Takami S."/>
            <person name="Terashima Y."/>
            <person name="Suzuki O."/>
            <person name="Nakagawa S."/>
            <person name="Senoh A."/>
            <person name="Mizoguchi H."/>
            <person name="Goto Y."/>
            <person name="Shimizu F."/>
            <person name="Wakebe H."/>
            <person name="Hishigaki H."/>
            <person name="Watanabe T."/>
            <person name="Sugiyama A."/>
            <person name="Takemoto M."/>
            <person name="Kawakami B."/>
            <person name="Yamazaki M."/>
            <person name="Watanabe K."/>
            <person name="Kumagai A."/>
            <person name="Itakura S."/>
            <person name="Fukuzumi Y."/>
            <person name="Fujimori Y."/>
            <person name="Komiyama M."/>
            <person name="Tashiro H."/>
            <person name="Tanigami A."/>
            <person name="Fujiwara T."/>
            <person name="Ono T."/>
            <person name="Yamada K."/>
            <person name="Fujii Y."/>
            <person name="Ozaki K."/>
            <person name="Hirao M."/>
            <person name="Ohmori Y."/>
            <person name="Kawabata A."/>
            <person name="Hikiji T."/>
            <person name="Kobatake N."/>
            <person name="Inagaki H."/>
            <person name="Ikema Y."/>
            <person name="Okamoto S."/>
            <person name="Okitani R."/>
            <person name="Kawakami T."/>
            <person name="Noguchi S."/>
            <person name="Itoh T."/>
            <person name="Shigeta K."/>
            <person name="Senba T."/>
            <person name="Matsumura K."/>
            <person name="Nakajima Y."/>
            <person name="Mizuno T."/>
            <person name="Morinaga M."/>
            <person name="Sasaki M."/>
            <person name="Togashi T."/>
            <person name="Oyama M."/>
            <person name="Hata H."/>
            <person name="Watanabe M."/>
            <person name="Komatsu T."/>
            <person name="Mizushima-Sugano J."/>
            <person name="Satoh T."/>
            <person name="Shirai Y."/>
            <person name="Takahashi Y."/>
            <person name="Nakagawa K."/>
            <person name="Okumura K."/>
            <person name="Nagase T."/>
            <person name="Nomura N."/>
            <person name="Kikuchi H."/>
            <person name="Masuho Y."/>
            <person name="Yamashita R."/>
            <person name="Nakai K."/>
            <person name="Yada T."/>
            <person name="Nakamura Y."/>
            <person name="Ohara O."/>
            <person name="Isogai T."/>
            <person name="Sugano S."/>
        </authorList>
    </citation>
    <scope>NUCLEOTIDE SEQUENCE [LARGE SCALE MRNA]</scope>
    <source>
        <tissue>Heart</tissue>
    </source>
</reference>
<reference key="4">
    <citation type="journal article" date="2005" name="Nature">
        <title>Generation and annotation of the DNA sequences of human chromosomes 2 and 4.</title>
        <authorList>
            <person name="Hillier L.W."/>
            <person name="Graves T.A."/>
            <person name="Fulton R.S."/>
            <person name="Fulton L.A."/>
            <person name="Pepin K.H."/>
            <person name="Minx P."/>
            <person name="Wagner-McPherson C."/>
            <person name="Layman D."/>
            <person name="Wylie K."/>
            <person name="Sekhon M."/>
            <person name="Becker M.C."/>
            <person name="Fewell G.A."/>
            <person name="Delehaunty K.D."/>
            <person name="Miner T.L."/>
            <person name="Nash W.E."/>
            <person name="Kremitzki C."/>
            <person name="Oddy L."/>
            <person name="Du H."/>
            <person name="Sun H."/>
            <person name="Bradshaw-Cordum H."/>
            <person name="Ali J."/>
            <person name="Carter J."/>
            <person name="Cordes M."/>
            <person name="Harris A."/>
            <person name="Isak A."/>
            <person name="van Brunt A."/>
            <person name="Nguyen C."/>
            <person name="Du F."/>
            <person name="Courtney L."/>
            <person name="Kalicki J."/>
            <person name="Ozersky P."/>
            <person name="Abbott S."/>
            <person name="Armstrong J."/>
            <person name="Belter E.A."/>
            <person name="Caruso L."/>
            <person name="Cedroni M."/>
            <person name="Cotton M."/>
            <person name="Davidson T."/>
            <person name="Desai A."/>
            <person name="Elliott G."/>
            <person name="Erb T."/>
            <person name="Fronick C."/>
            <person name="Gaige T."/>
            <person name="Haakenson W."/>
            <person name="Haglund K."/>
            <person name="Holmes A."/>
            <person name="Harkins R."/>
            <person name="Kim K."/>
            <person name="Kruchowski S.S."/>
            <person name="Strong C.M."/>
            <person name="Grewal N."/>
            <person name="Goyea E."/>
            <person name="Hou S."/>
            <person name="Levy A."/>
            <person name="Martinka S."/>
            <person name="Mead K."/>
            <person name="McLellan M.D."/>
            <person name="Meyer R."/>
            <person name="Randall-Maher J."/>
            <person name="Tomlinson C."/>
            <person name="Dauphin-Kohlberg S."/>
            <person name="Kozlowicz-Reilly A."/>
            <person name="Shah N."/>
            <person name="Swearengen-Shahid S."/>
            <person name="Snider J."/>
            <person name="Strong J.T."/>
            <person name="Thompson J."/>
            <person name="Yoakum M."/>
            <person name="Leonard S."/>
            <person name="Pearman C."/>
            <person name="Trani L."/>
            <person name="Radionenko M."/>
            <person name="Waligorski J.E."/>
            <person name="Wang C."/>
            <person name="Rock S.M."/>
            <person name="Tin-Wollam A.-M."/>
            <person name="Maupin R."/>
            <person name="Latreille P."/>
            <person name="Wendl M.C."/>
            <person name="Yang S.-P."/>
            <person name="Pohl C."/>
            <person name="Wallis J.W."/>
            <person name="Spieth J."/>
            <person name="Bieri T.A."/>
            <person name="Berkowicz N."/>
            <person name="Nelson J.O."/>
            <person name="Osborne J."/>
            <person name="Ding L."/>
            <person name="Meyer R."/>
            <person name="Sabo A."/>
            <person name="Shotland Y."/>
            <person name="Sinha P."/>
            <person name="Wohldmann P.E."/>
            <person name="Cook L.L."/>
            <person name="Hickenbotham M.T."/>
            <person name="Eldred J."/>
            <person name="Williams D."/>
            <person name="Jones T.A."/>
            <person name="She X."/>
            <person name="Ciccarelli F.D."/>
            <person name="Izaurralde E."/>
            <person name="Taylor J."/>
            <person name="Schmutz J."/>
            <person name="Myers R.M."/>
            <person name="Cox D.R."/>
            <person name="Huang X."/>
            <person name="McPherson J.D."/>
            <person name="Mardis E.R."/>
            <person name="Clifton S.W."/>
            <person name="Warren W.C."/>
            <person name="Chinwalla A.T."/>
            <person name="Eddy S.R."/>
            <person name="Marra M.A."/>
            <person name="Ovcharenko I."/>
            <person name="Furey T.S."/>
            <person name="Miller W."/>
            <person name="Eichler E.E."/>
            <person name="Bork P."/>
            <person name="Suyama M."/>
            <person name="Torrents D."/>
            <person name="Waterston R.H."/>
            <person name="Wilson R.K."/>
        </authorList>
    </citation>
    <scope>NUCLEOTIDE SEQUENCE [LARGE SCALE GENOMIC DNA]</scope>
</reference>
<reference key="5">
    <citation type="submission" date="2005-07" db="EMBL/GenBank/DDBJ databases">
        <authorList>
            <person name="Mural R.J."/>
            <person name="Istrail S."/>
            <person name="Sutton G.G."/>
            <person name="Florea L."/>
            <person name="Halpern A.L."/>
            <person name="Mobarry C.M."/>
            <person name="Lippert R."/>
            <person name="Walenz B."/>
            <person name="Shatkay H."/>
            <person name="Dew I."/>
            <person name="Miller J.R."/>
            <person name="Flanigan M.J."/>
            <person name="Edwards N.J."/>
            <person name="Bolanos R."/>
            <person name="Fasulo D."/>
            <person name="Halldorsson B.V."/>
            <person name="Hannenhalli S."/>
            <person name="Turner R."/>
            <person name="Yooseph S."/>
            <person name="Lu F."/>
            <person name="Nusskern D.R."/>
            <person name="Shue B.C."/>
            <person name="Zheng X.H."/>
            <person name="Zhong F."/>
            <person name="Delcher A.L."/>
            <person name="Huson D.H."/>
            <person name="Kravitz S.A."/>
            <person name="Mouchard L."/>
            <person name="Reinert K."/>
            <person name="Remington K.A."/>
            <person name="Clark A.G."/>
            <person name="Waterman M.S."/>
            <person name="Eichler E.E."/>
            <person name="Adams M.D."/>
            <person name="Hunkapiller M.W."/>
            <person name="Myers E.W."/>
            <person name="Venter J.C."/>
        </authorList>
    </citation>
    <scope>NUCLEOTIDE SEQUENCE [LARGE SCALE GENOMIC DNA]</scope>
</reference>
<reference key="6">
    <citation type="journal article" date="2004" name="Genome Res.">
        <title>The status, quality, and expansion of the NIH full-length cDNA project: the Mammalian Gene Collection (MGC).</title>
        <authorList>
            <consortium name="The MGC Project Team"/>
        </authorList>
    </citation>
    <scope>NUCLEOTIDE SEQUENCE [LARGE SCALE MRNA]</scope>
</reference>
<reference key="7">
    <citation type="journal article" date="1995" name="Gene">
        <title>Identification of rat alpha-albumin and cDNA cloning of its human ortholog.</title>
        <authorList>
            <person name="Allard D."/>
            <person name="Gilbert S."/>
            <person name="Lamontagne A."/>
            <person name="Hamel D."/>
            <person name="Belanger L."/>
        </authorList>
    </citation>
    <scope>NUCLEOTIDE SEQUENCE [MRNA] OF 1-69; 105-207 AND 560-599</scope>
    <source>
        <tissue>Liver</tissue>
    </source>
</reference>
<reference key="8">
    <citation type="journal article" date="2005" name="J. Proteome Res.">
        <title>Afamin is a novel human vitamin E-binding glycoprotein characterization and in vitro expression.</title>
        <authorList>
            <person name="Jerkovic L."/>
            <person name="Voegele A.F."/>
            <person name="Chwatal S."/>
            <person name="Kronenberg F."/>
            <person name="Radcliffe C.M."/>
            <person name="Wormald M.R."/>
            <person name="Lobentanz E.M."/>
            <person name="Ezeh B."/>
            <person name="Eller P."/>
            <person name="Dejori N."/>
            <person name="Dieplinger B."/>
            <person name="Lottspeich F."/>
            <person name="Sattler W."/>
            <person name="Uhr M."/>
            <person name="Mechtler K."/>
            <person name="Dwek R.A."/>
            <person name="Rudd P.M."/>
            <person name="Baier G."/>
            <person name="Dieplinger H."/>
        </authorList>
    </citation>
    <scope>PROTEIN SEQUENCE OF 22-45</scope>
    <scope>GLYCOSYLATION</scope>
    <scope>SUBCELLULAR LOCATION</scope>
    <scope>TISSUE SPECIFICITY</scope>
    <scope>FUNCTION</scope>
</reference>
<reference key="9">
    <citation type="journal article" date="2002" name="Biochemistry">
        <title>Characterization of the vitamin E-binding properties of human plasma afamin.</title>
        <authorList>
            <person name="Voegele A.F."/>
            <person name="Jerkovic L."/>
            <person name="Wellenzohn B."/>
            <person name="Eller P."/>
            <person name="Kronenberg F."/>
            <person name="Liedl K.R."/>
            <person name="Dieplinger H."/>
        </authorList>
    </citation>
    <scope>FUNCTION</scope>
    <scope>SUBCELLULAR LOCATION</scope>
    <scope>TISSUE SPECIFICITY</scope>
</reference>
<reference key="10">
    <citation type="journal article" date="2004" name="Proteomics">
        <title>Screening for N-glycosylated proteins by liquid chromatography mass spectrometry.</title>
        <authorList>
            <person name="Bunkenborg J."/>
            <person name="Pilch B.J."/>
            <person name="Podtelejnikov A.V."/>
            <person name="Wisniewski J.R."/>
        </authorList>
    </citation>
    <scope>GLYCOSYLATION [LARGE SCALE ANALYSIS] AT ASN-402</scope>
    <source>
        <tissue>Plasma</tissue>
    </source>
</reference>
<reference key="11">
    <citation type="journal article" date="2005" name="J. Proteome Res.">
        <title>Human plasma N-glycoproteome analysis by immunoaffinity subtraction, hydrazide chemistry, and mass spectrometry.</title>
        <authorList>
            <person name="Liu T."/>
            <person name="Qian W.-J."/>
            <person name="Gritsenko M.A."/>
            <person name="Camp D.G. II"/>
            <person name="Monroe M.E."/>
            <person name="Moore R.J."/>
            <person name="Smith R.D."/>
        </authorList>
    </citation>
    <scope>GLYCOSYLATION [LARGE SCALE ANALYSIS] AT ASN-33; ASN-402 AND ASN-488</scope>
    <source>
        <tissue>Plasma</tissue>
    </source>
</reference>
<reference key="12">
    <citation type="journal article" date="2006" name="J. Proteome Res.">
        <title>Identification of N-linked glycoproteins in human saliva by glycoprotein capture and mass spectrometry.</title>
        <authorList>
            <person name="Ramachandran P."/>
            <person name="Boontheung P."/>
            <person name="Xie Y."/>
            <person name="Sondej M."/>
            <person name="Wong D.T."/>
            <person name="Loo J.A."/>
        </authorList>
    </citation>
    <scope>GLYCOSYLATION [LARGE SCALE ANALYSIS] AT ASN-33</scope>
    <source>
        <tissue>Saliva</tissue>
    </source>
</reference>
<reference key="13">
    <citation type="journal article" date="2009" name="J. Neurochem.">
        <title>Afamin is synthesized by cerebrovascular endothelial cells and mediates alpha-tocopherol transport across an in vitro model of the blood-brain barrier.</title>
        <authorList>
            <person name="Kratzer I."/>
            <person name="Bernhart E."/>
            <person name="Wintersperger A."/>
            <person name="Hammer A."/>
            <person name="Waltl S."/>
            <person name="Malle E."/>
            <person name="Sperk G."/>
            <person name="Wietzorrek G."/>
            <person name="Dieplinger H."/>
            <person name="Sattler W."/>
        </authorList>
    </citation>
    <scope>FUNCTION</scope>
</reference>
<reference key="14">
    <citation type="journal article" date="2009" name="J. Proteome Res.">
        <title>Glycoproteomics analysis of human liver tissue by combination of multiple enzyme digestion and hydrazide chemistry.</title>
        <authorList>
            <person name="Chen R."/>
            <person name="Jiang X."/>
            <person name="Sun D."/>
            <person name="Han G."/>
            <person name="Wang F."/>
            <person name="Ye M."/>
            <person name="Wang L."/>
            <person name="Zou H."/>
        </authorList>
    </citation>
    <scope>GLYCOSYLATION [LARGE SCALE ANALYSIS] AT ASN-33 AND ASN-402</scope>
    <source>
        <tissue>Liver</tissue>
    </source>
</reference>
<reference key="15">
    <citation type="journal article" date="2009" name="Mol. Cell. Proteomics">
        <title>A strategy for precise and large scale identification of core fucosylated glycoproteins.</title>
        <authorList>
            <person name="Jia W."/>
            <person name="Lu Z."/>
            <person name="Fu Y."/>
            <person name="Wang H.P."/>
            <person name="Wang L.H."/>
            <person name="Chi H."/>
            <person name="Yuan Z.F."/>
            <person name="Zheng Z.B."/>
            <person name="Song L.N."/>
            <person name="Han H.H."/>
            <person name="Liang Y.M."/>
            <person name="Wang J.L."/>
            <person name="Cai Y."/>
            <person name="Zhang Y.K."/>
            <person name="Deng Y.L."/>
            <person name="Ying W.T."/>
            <person name="He S.M."/>
            <person name="Qian X.H."/>
        </authorList>
    </citation>
    <scope>GLYCOSYLATION AT ASN-33; ASN-383 AND ASN-402</scope>
</reference>
<reference key="16">
    <citation type="journal article" date="2009" name="Nat. Methods">
        <title>Enrichment of glycopeptides for glycan structure and attachment site identification.</title>
        <authorList>
            <person name="Nilsson J."/>
            <person name="Rueetschi U."/>
            <person name="Halim A."/>
            <person name="Hesse C."/>
            <person name="Carlsohn E."/>
            <person name="Brinkmalm G."/>
            <person name="Larson G."/>
        </authorList>
    </citation>
    <scope>GLYCOSYLATION [LARGE SCALE ANALYSIS] AT ASN-109; ASN-383 AND ASN-402</scope>
    <scope>STRUCTURE OF CARBOHYDRATES</scope>
    <source>
        <tissue>Cerebrospinal fluid</tissue>
    </source>
</reference>
<reference key="17">
    <citation type="journal article" date="2011" name="BMC Syst. Biol.">
        <title>Initial characterization of the human central proteome.</title>
        <authorList>
            <person name="Burkard T.R."/>
            <person name="Planyavsky M."/>
            <person name="Kaupe I."/>
            <person name="Breitwieser F.P."/>
            <person name="Buerckstuemmer T."/>
            <person name="Bennett K.L."/>
            <person name="Superti-Furga G."/>
            <person name="Colinge J."/>
        </authorList>
    </citation>
    <scope>IDENTIFICATION BY MASS SPECTROMETRY [LARGE SCALE ANALYSIS]</scope>
</reference>
<reference key="18">
    <citation type="journal article" date="2016" name="Elife">
        <title>Active and water-soluble form of lipidated Wnt protein is maintained by a serum glycoprotein afamin/alpha-albumin.</title>
        <authorList>
            <person name="Mihara E."/>
            <person name="Hirai H."/>
            <person name="Yamamoto H."/>
            <person name="Tamura-Kawakami K."/>
            <person name="Matano M."/>
            <person name="Kikuchi A."/>
            <person name="Sato T."/>
            <person name="Takagi J."/>
        </authorList>
    </citation>
    <scope>FUNCTION</scope>
    <scope>SUBCELLULAR LOCATION</scope>
    <scope>SUBUNIT</scope>
</reference>
<reference key="19">
    <citation type="journal article" date="2017" name="Structure">
        <title>Structural Evidence for a Role of the Multi-functional Human Glycoprotein Afamin in Wnt Transport.</title>
        <authorList>
            <person name="Naschberger A."/>
            <person name="Orry A."/>
            <person name="Lechner S."/>
            <person name="Bowler M.W."/>
            <person name="Nurizzo D."/>
            <person name="Novokmet M."/>
            <person name="Keller M.A."/>
            <person name="Oemer G."/>
            <person name="Seppi D."/>
            <person name="Haslbeck M."/>
            <person name="Pansi K."/>
            <person name="Dieplinger H."/>
            <person name="Rupp B."/>
        </authorList>
    </citation>
    <scope>X-RAY CRYSTALLOGRAPHY (2.09 ANGSTROMS) OF 22-599 IN COMPLEX WITH PALMITOLEIC ACID</scope>
    <scope>GLYCOSYLATION AT ASN-402 AND ASN-488</scope>
    <scope>DISULFIDE BONDS</scope>
    <scope>DOMAIN</scope>
</reference>
<comment type="function">
    <text evidence="2 4 7 11 15">Functions as a carrier for hydrophobic molecules in body fluids (Probable). Essential for the solubility and activity of lipidated Wnt family members, including WNT1, WNT2B, WNT3, WNT3A, WNT5A, WNT7A, WNT7B, WNT8, WNT9A, WNT9B, WNT10A and WNT10B (PubMed:26902720). Binds vitamin E (PubMed:12463752, PubMed:15952736). May transport vitamin E in body fluids under conditions where the lipoprotein system is not sufficient (PubMed:15952736). May be involved in the transport of vitamin E across the blood-brain barrier (PubMed:19046407).</text>
</comment>
<comment type="subunit">
    <text evidence="11">Forms a 1:1 complex with Wnt family members; interacts with WNT1, WNT2B, WNT3, WNT3A, WNT5A, WNT7A, WNT7B, WNT8, WNT9A, WNT9B, WNT10A and WNT10B.</text>
</comment>
<comment type="interaction">
    <interactant intactId="EBI-20737924">
        <id>P43652</id>
    </interactant>
    <interactant intactId="EBI-3644922">
        <id>P56703</id>
        <label>WNT3</label>
    </interactant>
    <organismsDiffer>false</organismsDiffer>
    <experiments>3</experiments>
</comment>
<comment type="interaction">
    <interactant intactId="EBI-20737924">
        <id>P43652</id>
    </interactant>
    <interactant intactId="EBI-2899665">
        <id>P27467</id>
        <label>Wnt3a</label>
    </interactant>
    <organismsDiffer>true</organismsDiffer>
    <experiments>3</experiments>
</comment>
<comment type="subcellular location">
    <subcellularLocation>
        <location evidence="2 4 11 13">Secreted</location>
    </subcellularLocation>
</comment>
<comment type="tissue specificity">
    <text evidence="2 4 13">High level detected in plasma but also in extravascular fluids such as follicular and cerebrospinal fluids (at protein level).</text>
</comment>
<comment type="domain">
    <text evidence="12 15">The second albumin domain forms a deep binding pocket that contains palmitoleic acid (in vitro) (PubMed:29153507). Palmitoleic acid is most likely not the physiological ligand. Instead, this pocket may accomodate the covalently bound lipid moiety of Wnt family members (Probable).</text>
</comment>
<comment type="PTM">
    <text evidence="3 4 5 6 8 9 10 12">N-glycosylated; more than 90% of the glycans are sialylated.</text>
</comment>
<comment type="similarity">
    <text evidence="1">Belongs to the ALB/AFP/VDB family.</text>
</comment>
<name>AFAM_HUMAN</name>
<proteinExistence type="evidence at protein level"/>
<organism>
    <name type="scientific">Homo sapiens</name>
    <name type="common">Human</name>
    <dbReference type="NCBI Taxonomy" id="9606"/>
    <lineage>
        <taxon>Eukaryota</taxon>
        <taxon>Metazoa</taxon>
        <taxon>Chordata</taxon>
        <taxon>Craniata</taxon>
        <taxon>Vertebrata</taxon>
        <taxon>Euteleostomi</taxon>
        <taxon>Mammalia</taxon>
        <taxon>Eutheria</taxon>
        <taxon>Euarchontoglires</taxon>
        <taxon>Primates</taxon>
        <taxon>Haplorrhini</taxon>
        <taxon>Catarrhini</taxon>
        <taxon>Hominidae</taxon>
        <taxon>Homo</taxon>
    </lineage>
</organism>